<evidence type="ECO:0000255" key="1">
    <source>
        <dbReference type="HAMAP-Rule" id="MF_00107"/>
    </source>
</evidence>
<gene>
    <name evidence="1" type="primary">ispF</name>
    <name type="ordered locus">lin0268</name>
</gene>
<feature type="chain" id="PRO_0000189476" description="2-C-methyl-D-erythritol 2,4-cyclodiphosphate synthase">
    <location>
        <begin position="1"/>
        <end position="157"/>
    </location>
</feature>
<feature type="binding site" evidence="1">
    <location>
        <begin position="9"/>
        <end position="11"/>
    </location>
    <ligand>
        <name>4-CDP-2-C-methyl-D-erythritol 2-phosphate</name>
        <dbReference type="ChEBI" id="CHEBI:57919"/>
    </ligand>
</feature>
<feature type="binding site" evidence="1">
    <location>
        <position position="9"/>
    </location>
    <ligand>
        <name>a divalent metal cation</name>
        <dbReference type="ChEBI" id="CHEBI:60240"/>
    </ligand>
</feature>
<feature type="binding site" evidence="1">
    <location>
        <position position="11"/>
    </location>
    <ligand>
        <name>a divalent metal cation</name>
        <dbReference type="ChEBI" id="CHEBI:60240"/>
    </ligand>
</feature>
<feature type="binding site" evidence="1">
    <location>
        <begin position="35"/>
        <end position="36"/>
    </location>
    <ligand>
        <name>4-CDP-2-C-methyl-D-erythritol 2-phosphate</name>
        <dbReference type="ChEBI" id="CHEBI:57919"/>
    </ligand>
</feature>
<feature type="binding site" evidence="1">
    <location>
        <position position="43"/>
    </location>
    <ligand>
        <name>a divalent metal cation</name>
        <dbReference type="ChEBI" id="CHEBI:60240"/>
    </ligand>
</feature>
<feature type="binding site" evidence="1">
    <location>
        <begin position="57"/>
        <end position="59"/>
    </location>
    <ligand>
        <name>4-CDP-2-C-methyl-D-erythritol 2-phosphate</name>
        <dbReference type="ChEBI" id="CHEBI:57919"/>
    </ligand>
</feature>
<feature type="binding site" evidence="1">
    <location>
        <begin position="62"/>
        <end position="66"/>
    </location>
    <ligand>
        <name>4-CDP-2-C-methyl-D-erythritol 2-phosphate</name>
        <dbReference type="ChEBI" id="CHEBI:57919"/>
    </ligand>
</feature>
<feature type="binding site" evidence="1">
    <location>
        <begin position="101"/>
        <end position="107"/>
    </location>
    <ligand>
        <name>4-CDP-2-C-methyl-D-erythritol 2-phosphate</name>
        <dbReference type="ChEBI" id="CHEBI:57919"/>
    </ligand>
</feature>
<feature type="binding site" evidence="1">
    <location>
        <begin position="133"/>
        <end position="136"/>
    </location>
    <ligand>
        <name>4-CDP-2-C-methyl-D-erythritol 2-phosphate</name>
        <dbReference type="ChEBI" id="CHEBI:57919"/>
    </ligand>
</feature>
<feature type="binding site" evidence="1">
    <location>
        <position position="140"/>
    </location>
    <ligand>
        <name>4-CDP-2-C-methyl-D-erythritol 2-phosphate</name>
        <dbReference type="ChEBI" id="CHEBI:57919"/>
    </ligand>
</feature>
<feature type="binding site" evidence="1">
    <location>
        <position position="143"/>
    </location>
    <ligand>
        <name>4-CDP-2-C-methyl-D-erythritol 2-phosphate</name>
        <dbReference type="ChEBI" id="CHEBI:57919"/>
    </ligand>
</feature>
<feature type="site" description="Transition state stabilizer" evidence="1">
    <location>
        <position position="35"/>
    </location>
</feature>
<feature type="site" description="Transition state stabilizer" evidence="1">
    <location>
        <position position="134"/>
    </location>
</feature>
<comment type="function">
    <text evidence="1">Involved in the biosynthesis of isopentenyl diphosphate (IPP) and dimethylallyl diphosphate (DMAPP), two major building blocks of isoprenoid compounds. Catalyzes the conversion of 4-diphosphocytidyl-2-C-methyl-D-erythritol 2-phosphate (CDP-ME2P) to 2-C-methyl-D-erythritol 2,4-cyclodiphosphate (ME-CPP) with a corresponding release of cytidine 5-monophosphate (CMP).</text>
</comment>
<comment type="catalytic activity">
    <reaction evidence="1">
        <text>4-CDP-2-C-methyl-D-erythritol 2-phosphate = 2-C-methyl-D-erythritol 2,4-cyclic diphosphate + CMP</text>
        <dbReference type="Rhea" id="RHEA:23864"/>
        <dbReference type="ChEBI" id="CHEBI:57919"/>
        <dbReference type="ChEBI" id="CHEBI:58483"/>
        <dbReference type="ChEBI" id="CHEBI:60377"/>
        <dbReference type="EC" id="4.6.1.12"/>
    </reaction>
</comment>
<comment type="cofactor">
    <cofactor evidence="1">
        <name>a divalent metal cation</name>
        <dbReference type="ChEBI" id="CHEBI:60240"/>
    </cofactor>
    <text evidence="1">Binds 1 divalent metal cation per subunit.</text>
</comment>
<comment type="pathway">
    <text evidence="1">Isoprenoid biosynthesis; isopentenyl diphosphate biosynthesis via DXP pathway; isopentenyl diphosphate from 1-deoxy-D-xylulose 5-phosphate: step 4/6.</text>
</comment>
<comment type="subunit">
    <text evidence="1">Homotrimer.</text>
</comment>
<comment type="similarity">
    <text evidence="1">Belongs to the IspF family.</text>
</comment>
<keyword id="KW-0414">Isoprene biosynthesis</keyword>
<keyword id="KW-0456">Lyase</keyword>
<keyword id="KW-0479">Metal-binding</keyword>
<organism>
    <name type="scientific">Listeria innocua serovar 6a (strain ATCC BAA-680 / CLIP 11262)</name>
    <dbReference type="NCBI Taxonomy" id="272626"/>
    <lineage>
        <taxon>Bacteria</taxon>
        <taxon>Bacillati</taxon>
        <taxon>Bacillota</taxon>
        <taxon>Bacilli</taxon>
        <taxon>Bacillales</taxon>
        <taxon>Listeriaceae</taxon>
        <taxon>Listeria</taxon>
    </lineage>
</organism>
<proteinExistence type="inferred from homology"/>
<accession>Q92F39</accession>
<name>ISPF_LISIN</name>
<protein>
    <recommendedName>
        <fullName evidence="1">2-C-methyl-D-erythritol 2,4-cyclodiphosphate synthase</fullName>
        <shortName evidence="1">MECDP-synthase</shortName>
        <shortName evidence="1">MECPP-synthase</shortName>
        <shortName evidence="1">MECPS</shortName>
        <ecNumber evidence="1">4.6.1.12</ecNumber>
    </recommendedName>
</protein>
<sequence>MIRIGQGYDVHKLDYDRELIIGGIKIPYEKGLLGHSDADVLLHAITDAIIGAIGALDIGHFFPDTDMAYKDADSAELLAEIWRQVEAEGFKLGNLDATIIAEKPKMAPYVELMKRRIAELLHAEPSQVNVKATTTEKLGFTGREEGIASLAVVLLEK</sequence>
<reference key="1">
    <citation type="journal article" date="2001" name="Science">
        <title>Comparative genomics of Listeria species.</title>
        <authorList>
            <person name="Glaser P."/>
            <person name="Frangeul L."/>
            <person name="Buchrieser C."/>
            <person name="Rusniok C."/>
            <person name="Amend A."/>
            <person name="Baquero F."/>
            <person name="Berche P."/>
            <person name="Bloecker H."/>
            <person name="Brandt P."/>
            <person name="Chakraborty T."/>
            <person name="Charbit A."/>
            <person name="Chetouani F."/>
            <person name="Couve E."/>
            <person name="de Daruvar A."/>
            <person name="Dehoux P."/>
            <person name="Domann E."/>
            <person name="Dominguez-Bernal G."/>
            <person name="Duchaud E."/>
            <person name="Durant L."/>
            <person name="Dussurget O."/>
            <person name="Entian K.-D."/>
            <person name="Fsihi H."/>
            <person name="Garcia-del Portillo F."/>
            <person name="Garrido P."/>
            <person name="Gautier L."/>
            <person name="Goebel W."/>
            <person name="Gomez-Lopez N."/>
            <person name="Hain T."/>
            <person name="Hauf J."/>
            <person name="Jackson D."/>
            <person name="Jones L.-M."/>
            <person name="Kaerst U."/>
            <person name="Kreft J."/>
            <person name="Kuhn M."/>
            <person name="Kunst F."/>
            <person name="Kurapkat G."/>
            <person name="Madueno E."/>
            <person name="Maitournam A."/>
            <person name="Mata Vicente J."/>
            <person name="Ng E."/>
            <person name="Nedjari H."/>
            <person name="Nordsiek G."/>
            <person name="Novella S."/>
            <person name="de Pablos B."/>
            <person name="Perez-Diaz J.-C."/>
            <person name="Purcell R."/>
            <person name="Remmel B."/>
            <person name="Rose M."/>
            <person name="Schlueter T."/>
            <person name="Simoes N."/>
            <person name="Tierrez A."/>
            <person name="Vazquez-Boland J.-A."/>
            <person name="Voss H."/>
            <person name="Wehland J."/>
            <person name="Cossart P."/>
        </authorList>
    </citation>
    <scope>NUCLEOTIDE SEQUENCE [LARGE SCALE GENOMIC DNA]</scope>
    <source>
        <strain>ATCC BAA-680 / CLIP 11262</strain>
    </source>
</reference>
<dbReference type="EC" id="4.6.1.12" evidence="1"/>
<dbReference type="EMBL" id="AL596164">
    <property type="protein sequence ID" value="CAC95501.1"/>
    <property type="molecule type" value="Genomic_DNA"/>
</dbReference>
<dbReference type="PIR" id="AE1466">
    <property type="entry name" value="AE1466"/>
</dbReference>
<dbReference type="RefSeq" id="WP_003770122.1">
    <property type="nucleotide sequence ID" value="NC_003212.1"/>
</dbReference>
<dbReference type="SMR" id="Q92F39"/>
<dbReference type="STRING" id="272626.gene:17564595"/>
<dbReference type="KEGG" id="lin:lin0268"/>
<dbReference type="eggNOG" id="COG0245">
    <property type="taxonomic scope" value="Bacteria"/>
</dbReference>
<dbReference type="HOGENOM" id="CLU_084630_2_0_9"/>
<dbReference type="OrthoDB" id="9804336at2"/>
<dbReference type="UniPathway" id="UPA00056">
    <property type="reaction ID" value="UER00095"/>
</dbReference>
<dbReference type="Proteomes" id="UP000002513">
    <property type="component" value="Chromosome"/>
</dbReference>
<dbReference type="GO" id="GO:0008685">
    <property type="term" value="F:2-C-methyl-D-erythritol 2,4-cyclodiphosphate synthase activity"/>
    <property type="evidence" value="ECO:0007669"/>
    <property type="project" value="UniProtKB-UniRule"/>
</dbReference>
<dbReference type="GO" id="GO:0046872">
    <property type="term" value="F:metal ion binding"/>
    <property type="evidence" value="ECO:0007669"/>
    <property type="project" value="UniProtKB-KW"/>
</dbReference>
<dbReference type="GO" id="GO:0019288">
    <property type="term" value="P:isopentenyl diphosphate biosynthetic process, methylerythritol 4-phosphate pathway"/>
    <property type="evidence" value="ECO:0007669"/>
    <property type="project" value="UniProtKB-UniRule"/>
</dbReference>
<dbReference type="GO" id="GO:0016114">
    <property type="term" value="P:terpenoid biosynthetic process"/>
    <property type="evidence" value="ECO:0007669"/>
    <property type="project" value="InterPro"/>
</dbReference>
<dbReference type="CDD" id="cd00554">
    <property type="entry name" value="MECDP_synthase"/>
    <property type="match status" value="1"/>
</dbReference>
<dbReference type="FunFam" id="3.30.1330.50:FF:000001">
    <property type="entry name" value="2-C-methyl-D-erythritol 2,4-cyclodiphosphate synthase"/>
    <property type="match status" value="1"/>
</dbReference>
<dbReference type="Gene3D" id="3.30.1330.50">
    <property type="entry name" value="2-C-methyl-D-erythritol 2,4-cyclodiphosphate synthase"/>
    <property type="match status" value="1"/>
</dbReference>
<dbReference type="HAMAP" id="MF_00107">
    <property type="entry name" value="IspF"/>
    <property type="match status" value="1"/>
</dbReference>
<dbReference type="InterPro" id="IPR003526">
    <property type="entry name" value="MECDP_synthase"/>
</dbReference>
<dbReference type="InterPro" id="IPR020555">
    <property type="entry name" value="MECDP_synthase_CS"/>
</dbReference>
<dbReference type="InterPro" id="IPR036571">
    <property type="entry name" value="MECDP_synthase_sf"/>
</dbReference>
<dbReference type="NCBIfam" id="TIGR00151">
    <property type="entry name" value="ispF"/>
    <property type="match status" value="1"/>
</dbReference>
<dbReference type="PANTHER" id="PTHR43181">
    <property type="entry name" value="2-C-METHYL-D-ERYTHRITOL 2,4-CYCLODIPHOSPHATE SYNTHASE, CHLOROPLASTIC"/>
    <property type="match status" value="1"/>
</dbReference>
<dbReference type="PANTHER" id="PTHR43181:SF1">
    <property type="entry name" value="2-C-METHYL-D-ERYTHRITOL 2,4-CYCLODIPHOSPHATE SYNTHASE, CHLOROPLASTIC"/>
    <property type="match status" value="1"/>
</dbReference>
<dbReference type="Pfam" id="PF02542">
    <property type="entry name" value="YgbB"/>
    <property type="match status" value="1"/>
</dbReference>
<dbReference type="SUPFAM" id="SSF69765">
    <property type="entry name" value="IpsF-like"/>
    <property type="match status" value="1"/>
</dbReference>
<dbReference type="PROSITE" id="PS01350">
    <property type="entry name" value="ISPF"/>
    <property type="match status" value="1"/>
</dbReference>